<sequence length="748" mass="83044">MASSPDPPSPLLVRLRESIPKAHRKLEIYFQSRASGGGECSVQPVGPSAPDTYEVKFLKKADKEKVLKKSEHEMLVHNKPVTIVLETTKKPVEDLRPRLPSLTQPVETPSSRPPSLTGSLDEALCDDIHPQDGLVSNSVDSVVQKIFLAVTAELNCDLLSKEQRASITTVCPHIIKSMEGSDGIKKVCGNFKDIEKIHHFLSEQLLEREQKRKGSEQKRKCAPQKHTPPDVEREPPDQSSIQVPVLLLEYFKHVNPGRLEFIEYKFGVNIEIQASSPNMVTVGFTSSPFGNVEEASQSFVRDFQKCSQSLKQDCISLEEHQRAKEVRQELSRCFPKLLIKGQGRTLTLLGSPADISAATEKVSQGLGLRPVKITASGYTTGIEVDSTRFKLLEPELLQEISEIEQKFNTRGKVQEKGQKTCILFVPKDKDLDLSVQSYTGFTDAFQRATWQLRTEVLSLKGLGKERARLHNTKFADNFKKEHPNVHFVTSQESVTLTGLPHHLAQAMQYVSKRMGLAPSSGEKLAMDQETPMEISSSDPHGDQQENAALPAPRGTSSSPAASKGTEDYCVICMDTISNKHVLPKCKHEFCTSCISKAMLIKPVCPVCLTSYGIQKGNQPEGTMSYSTQKGSLPGYEGCGTIVINYEIKDGIQTKEHPNPGKAYHGTRRTAYLPDNTEGRKVLDLLHEAFKHRLTFTIGYSRATGVSDVITWNDIHHKTSKFGGPANFGYPDPDYLKRVKEELKAKGIE</sequence>
<gene>
    <name type="primary">Dtx3l</name>
    <name type="synonym">Bbap</name>
</gene>
<comment type="function">
    <text evidence="1">E3 ubiquitin-protein ligase which, in association with ADP-ribosyltransferase PARP9, plays a role in DNA damage repair and in interferon-mediated antiviral responses. Monoubiquitinates several histones, including histone H2A, H2B, H3 and H4. In response to DNA damage, mediates monoubiquitination of 'Lys-91' of histone H4 (H4K91ub1). The exact role of H4K91ub1 in DNA damage response is still unclear but it may function as a licensing signal for additional histone H4 post-translational modifications such as H4 'Lys-20' methylation (H4K20me). PARP1-dependent PARP9-DTX3L-mediated ubiquitination promotes the rapid and specific recruitment of 53BP1/TP53BP1, UIMC1/RAP80, and BRCA1 to DNA damage sites. By monoubiquitinating histone H2B H2BC9/H2BJ and thereby promoting chromatin remodeling, positively regulates STAT1-dependent interferon-stimulated gene transcription and thus STAT1-mediated control of viral replication. Independently of its catalytic activity, promotes the sorting of chemokine receptor CXCR4 from early endosome to lysosome following CXCL12 stimulation by reducing E3 ligase ITCH activity and thus ITCH-mediated ubiquitination of endosomal sorting complex required for transport ESCRT-0 components HGS and STAM. In addition, required for the recruitment of HGS and STAM to early endosomes.</text>
</comment>
<comment type="catalytic activity">
    <reaction evidence="1">
        <text>S-ubiquitinyl-[E2 ubiquitin-conjugating enzyme]-L-cysteine + [acceptor protein]-L-lysine = [E2 ubiquitin-conjugating enzyme]-L-cysteine + N(6)-ubiquitinyl-[acceptor protein]-L-lysine.</text>
        <dbReference type="EC" id="2.3.2.27"/>
    </reaction>
</comment>
<comment type="activity regulation">
    <text evidence="1">Binding to PARP9 enhances DTX3L catalytic activity.</text>
</comment>
<comment type="pathway">
    <text evidence="1">Protein modification; protein ubiquitination.</text>
</comment>
<comment type="subunit">
    <text evidence="1">Homodimer and heterodimer. Can heterodimerize with DTX1, enhancing its ubiquitin ligase activity in vitro. Interacts (via N-terminus) with ADP ribosyltransferase PARP9/BAL1 (via PARP catalytic domain) forming a stable complex; the interaction is required to activate PARP9 but is dispensable for DTX3L catalytic activity. Forms a complex with STAT1 and PARP9 independently of IFNB1 or IFNG-mediated STAT1 'Tyr-701' phosphorylation. Found in a complex with PARP9, STAT1 and H2BC9. Found in a complex with E3 ligase ITCH and ESCRT-0 components HGS and STAM. Interacts (via C-terminus) with ITCH; the interaction is increased upon CXCL12 stimulation and inhibits ITCH catalytic activity; the interaction is direct. Interacts with HGS and STAM; the interaction brings together HGS and STAM and promotes their recruitment to early endosomes.</text>
</comment>
<comment type="subcellular location">
    <subcellularLocation>
        <location evidence="1">Cytoplasm</location>
    </subcellularLocation>
    <subcellularLocation>
        <location evidence="1">Nucleus</location>
    </subcellularLocation>
    <subcellularLocation>
        <location evidence="1">Early endosome membrane</location>
        <topology evidence="1">Peripheral membrane protein</topology>
        <orientation evidence="1">Cytoplasmic side</orientation>
    </subcellularLocation>
    <subcellularLocation>
        <location evidence="1">Lysosome membrane</location>
        <topology evidence="1">Peripheral membrane protein</topology>
        <orientation evidence="1">Cytoplasmic side</orientation>
    </subcellularLocation>
    <text evidence="1">Translocates to the nucleus in response to IFNG or IFNB1 stimulation. Localizes at sites of DNA damage in a PARP1-dependent manner. Localization to early endosomes is increased upon CXCL12 stimulation where it co-localizes with ITCH, CXCL4, HGS and STAM. A minor proportion localizes to lysosomes.</text>
</comment>
<comment type="alternative products">
    <event type="alternative splicing"/>
    <isoform>
        <id>Q3UIR3-1</id>
        <name>1</name>
        <sequence type="displayed"/>
    </isoform>
    <isoform>
        <id>Q3UIR3-2</id>
        <name>2</name>
        <sequence type="described" ref="VSP_038533"/>
    </isoform>
</comment>
<comment type="developmental stage">
    <text evidence="4">Developmentally regulated. Expressed prominently in the thymus and specific regions of the brain, and more weakly expressed in the gut. In adults, highly expressed in the thymus and intestine.</text>
</comment>
<comment type="PTM">
    <text evidence="1">Autoubiquitinated.</text>
</comment>
<comment type="similarity">
    <text evidence="6">Belongs to the Deltex family.</text>
</comment>
<comment type="sequence caution" evidence="6">
    <conflict type="frameshift">
        <sequence resource="EMBL-CDS" id="BAC41115"/>
    </conflict>
</comment>
<protein>
    <recommendedName>
        <fullName>E3 ubiquitin-protein ligase DTX3L</fullName>
        <ecNumber evidence="1">2.3.2.27</ecNumber>
    </recommendedName>
    <alternativeName>
        <fullName>Protein deltex-3-like</fullName>
    </alternativeName>
    <alternativeName>
        <fullName evidence="6">RING-type E3 ubiquitin transferase DTX3L</fullName>
    </alternativeName>
</protein>
<keyword id="KW-0007">Acetylation</keyword>
<keyword id="KW-0025">Alternative splicing</keyword>
<keyword id="KW-0051">Antiviral defense</keyword>
<keyword id="KW-0156">Chromatin regulator</keyword>
<keyword id="KW-0963">Cytoplasm</keyword>
<keyword id="KW-0227">DNA damage</keyword>
<keyword id="KW-0234">DNA repair</keyword>
<keyword id="KW-0967">Endosome</keyword>
<keyword id="KW-0391">Immunity</keyword>
<keyword id="KW-0399">Innate immunity</keyword>
<keyword id="KW-0458">Lysosome</keyword>
<keyword id="KW-0472">Membrane</keyword>
<keyword id="KW-0479">Metal-binding</keyword>
<keyword id="KW-0539">Nucleus</keyword>
<keyword id="KW-0597">Phosphoprotein</keyword>
<keyword id="KW-0653">Protein transport</keyword>
<keyword id="KW-1185">Reference proteome</keyword>
<keyword id="KW-0808">Transferase</keyword>
<keyword id="KW-0813">Transport</keyword>
<keyword id="KW-0832">Ubl conjugation</keyword>
<keyword id="KW-0833">Ubl conjugation pathway</keyword>
<keyword id="KW-0862">Zinc</keyword>
<keyword id="KW-0863">Zinc-finger</keyword>
<organism>
    <name type="scientific">Mus musculus</name>
    <name type="common">Mouse</name>
    <dbReference type="NCBI Taxonomy" id="10090"/>
    <lineage>
        <taxon>Eukaryota</taxon>
        <taxon>Metazoa</taxon>
        <taxon>Chordata</taxon>
        <taxon>Craniata</taxon>
        <taxon>Vertebrata</taxon>
        <taxon>Euteleostomi</taxon>
        <taxon>Mammalia</taxon>
        <taxon>Eutheria</taxon>
        <taxon>Euarchontoglires</taxon>
        <taxon>Glires</taxon>
        <taxon>Rodentia</taxon>
        <taxon>Myomorpha</taxon>
        <taxon>Muroidea</taxon>
        <taxon>Muridae</taxon>
        <taxon>Murinae</taxon>
        <taxon>Mus</taxon>
        <taxon>Mus</taxon>
    </lineage>
</organism>
<proteinExistence type="evidence at protein level"/>
<evidence type="ECO:0000250" key="1">
    <source>
        <dbReference type="UniProtKB" id="Q8TDB6"/>
    </source>
</evidence>
<evidence type="ECO:0000255" key="2">
    <source>
        <dbReference type="PROSITE-ProRule" id="PRU00175"/>
    </source>
</evidence>
<evidence type="ECO:0000256" key="3">
    <source>
        <dbReference type="SAM" id="MobiDB-lite"/>
    </source>
</evidence>
<evidence type="ECO:0000269" key="4">
    <source>
    </source>
</evidence>
<evidence type="ECO:0000303" key="5">
    <source>
    </source>
</evidence>
<evidence type="ECO:0000305" key="6"/>
<name>DTX3L_MOUSE</name>
<dbReference type="EC" id="2.3.2.27" evidence="1"/>
<dbReference type="EMBL" id="AK146802">
    <property type="protein sequence ID" value="BAE27443.1"/>
    <property type="molecule type" value="mRNA"/>
</dbReference>
<dbReference type="EMBL" id="AK090152">
    <property type="protein sequence ID" value="BAC41115.1"/>
    <property type="status" value="ALT_FRAME"/>
    <property type="molecule type" value="mRNA"/>
</dbReference>
<dbReference type="EMBL" id="CH466521">
    <property type="protein sequence ID" value="EDK97899.1"/>
    <property type="molecule type" value="Genomic_DNA"/>
</dbReference>
<dbReference type="EMBL" id="BC137694">
    <property type="protein sequence ID" value="AAI37695.1"/>
    <property type="molecule type" value="mRNA"/>
</dbReference>
<dbReference type="CCDS" id="CCDS37325.1">
    <molecule id="Q3UIR3-1"/>
</dbReference>
<dbReference type="RefSeq" id="NP_001013389.2">
    <molecule id="Q3UIR3-1"/>
    <property type="nucleotide sequence ID" value="NM_001013371.2"/>
</dbReference>
<dbReference type="SMR" id="Q3UIR3"/>
<dbReference type="BioGRID" id="229055">
    <property type="interactions" value="6"/>
</dbReference>
<dbReference type="FunCoup" id="Q3UIR3">
    <property type="interactions" value="1450"/>
</dbReference>
<dbReference type="IntAct" id="Q3UIR3">
    <property type="interactions" value="2"/>
</dbReference>
<dbReference type="MINT" id="Q3UIR3"/>
<dbReference type="STRING" id="10090.ENSMUSP00000080601"/>
<dbReference type="GlyGen" id="Q3UIR3">
    <property type="glycosylation" value="1 site, 1 O-linked glycan (1 site)"/>
</dbReference>
<dbReference type="iPTMnet" id="Q3UIR3"/>
<dbReference type="PhosphoSitePlus" id="Q3UIR3"/>
<dbReference type="SwissPalm" id="Q3UIR3"/>
<dbReference type="jPOST" id="Q3UIR3"/>
<dbReference type="PaxDb" id="10090-ENSMUSP00000080601"/>
<dbReference type="PeptideAtlas" id="Q3UIR3"/>
<dbReference type="ProteomicsDB" id="275408">
    <molecule id="Q3UIR3-1"/>
</dbReference>
<dbReference type="ProteomicsDB" id="275409">
    <molecule id="Q3UIR3-2"/>
</dbReference>
<dbReference type="Pumba" id="Q3UIR3"/>
<dbReference type="Antibodypedia" id="2147">
    <property type="antibodies" value="147 antibodies from 30 providers"/>
</dbReference>
<dbReference type="DNASU" id="209200"/>
<dbReference type="Ensembl" id="ENSMUST00000081933.14">
    <molecule id="Q3UIR3-1"/>
    <property type="protein sequence ID" value="ENSMUSP00000080601.8"/>
    <property type="gene ID" value="ENSMUSG00000049502.18"/>
</dbReference>
<dbReference type="Ensembl" id="ENSMUST00000114885.3">
    <molecule id="Q3UIR3-2"/>
    <property type="protein sequence ID" value="ENSMUSP00000110535.2"/>
    <property type="gene ID" value="ENSMUSG00000049502.18"/>
</dbReference>
<dbReference type="GeneID" id="209200"/>
<dbReference type="KEGG" id="mmu:209200"/>
<dbReference type="UCSC" id="uc007zbv.1">
    <molecule id="Q3UIR3-1"/>
    <property type="organism name" value="mouse"/>
</dbReference>
<dbReference type="UCSC" id="uc007zbw.1">
    <molecule id="Q3UIR3-2"/>
    <property type="organism name" value="mouse"/>
</dbReference>
<dbReference type="AGR" id="MGI:2656973"/>
<dbReference type="CTD" id="151636"/>
<dbReference type="MGI" id="MGI:2656973">
    <property type="gene designation" value="Dtx3l"/>
</dbReference>
<dbReference type="VEuPathDB" id="HostDB:ENSMUSG00000049502"/>
<dbReference type="eggNOG" id="ENOG502RGAW">
    <property type="taxonomic scope" value="Eukaryota"/>
</dbReference>
<dbReference type="GeneTree" id="ENSGT00940000154578"/>
<dbReference type="HOGENOM" id="CLU_024295_0_0_1"/>
<dbReference type="InParanoid" id="Q3UIR3"/>
<dbReference type="OMA" id="FKYICPD"/>
<dbReference type="OrthoDB" id="527344at2759"/>
<dbReference type="PhylomeDB" id="Q3UIR3"/>
<dbReference type="TreeFam" id="TF325526"/>
<dbReference type="Reactome" id="R-MMU-983168">
    <property type="pathway name" value="Antigen processing: Ubiquitination &amp; Proteasome degradation"/>
</dbReference>
<dbReference type="UniPathway" id="UPA00143"/>
<dbReference type="BioGRID-ORCS" id="209200">
    <property type="hits" value="3 hits in 85 CRISPR screens"/>
</dbReference>
<dbReference type="ChiTaRS" id="Dtx3l">
    <property type="organism name" value="mouse"/>
</dbReference>
<dbReference type="PRO" id="PR:Q3UIR3"/>
<dbReference type="Proteomes" id="UP000000589">
    <property type="component" value="Chromosome 16"/>
</dbReference>
<dbReference type="RNAct" id="Q3UIR3">
    <property type="molecule type" value="protein"/>
</dbReference>
<dbReference type="Bgee" id="ENSMUSG00000049502">
    <property type="expression patterns" value="Expressed in small intestine Peyer's patch and 188 other cell types or tissues"/>
</dbReference>
<dbReference type="GO" id="GO:0005737">
    <property type="term" value="C:cytoplasm"/>
    <property type="evidence" value="ECO:0000250"/>
    <property type="project" value="UniProtKB"/>
</dbReference>
<dbReference type="GO" id="GO:0005829">
    <property type="term" value="C:cytosol"/>
    <property type="evidence" value="ECO:0007669"/>
    <property type="project" value="Ensembl"/>
</dbReference>
<dbReference type="GO" id="GO:0031901">
    <property type="term" value="C:early endosome membrane"/>
    <property type="evidence" value="ECO:0007669"/>
    <property type="project" value="UniProtKB-SubCell"/>
</dbReference>
<dbReference type="GO" id="GO:0005765">
    <property type="term" value="C:lysosomal membrane"/>
    <property type="evidence" value="ECO:0007669"/>
    <property type="project" value="UniProtKB-SubCell"/>
</dbReference>
<dbReference type="GO" id="GO:0005654">
    <property type="term" value="C:nucleoplasm"/>
    <property type="evidence" value="ECO:0007669"/>
    <property type="project" value="Ensembl"/>
</dbReference>
<dbReference type="GO" id="GO:0005634">
    <property type="term" value="C:nucleus"/>
    <property type="evidence" value="ECO:0000250"/>
    <property type="project" value="UniProtKB"/>
</dbReference>
<dbReference type="GO" id="GO:0032991">
    <property type="term" value="C:protein-containing complex"/>
    <property type="evidence" value="ECO:0007669"/>
    <property type="project" value="Ensembl"/>
</dbReference>
<dbReference type="GO" id="GO:0004857">
    <property type="term" value="F:enzyme inhibitor activity"/>
    <property type="evidence" value="ECO:0007669"/>
    <property type="project" value="Ensembl"/>
</dbReference>
<dbReference type="GO" id="GO:0042393">
    <property type="term" value="F:histone binding"/>
    <property type="evidence" value="ECO:0000250"/>
    <property type="project" value="UniProtKB"/>
</dbReference>
<dbReference type="GO" id="GO:0141000">
    <property type="term" value="F:histone H4K91 ubiquitin ligase activity"/>
    <property type="evidence" value="ECO:0007669"/>
    <property type="project" value="Ensembl"/>
</dbReference>
<dbReference type="GO" id="GO:0140768">
    <property type="term" value="F:protein ADP-ribosyltransferase-substrate adaptor activity"/>
    <property type="evidence" value="ECO:0007669"/>
    <property type="project" value="Ensembl"/>
</dbReference>
<dbReference type="GO" id="GO:0097677">
    <property type="term" value="F:STAT family protein binding"/>
    <property type="evidence" value="ECO:0007669"/>
    <property type="project" value="Ensembl"/>
</dbReference>
<dbReference type="GO" id="GO:0044389">
    <property type="term" value="F:ubiquitin-like protein ligase binding"/>
    <property type="evidence" value="ECO:0007669"/>
    <property type="project" value="Ensembl"/>
</dbReference>
<dbReference type="GO" id="GO:0004842">
    <property type="term" value="F:ubiquitin-protein transferase activity"/>
    <property type="evidence" value="ECO:0000250"/>
    <property type="project" value="UniProtKB"/>
</dbReference>
<dbReference type="GO" id="GO:0008270">
    <property type="term" value="F:zinc ion binding"/>
    <property type="evidence" value="ECO:0007669"/>
    <property type="project" value="UniProtKB-KW"/>
</dbReference>
<dbReference type="GO" id="GO:0051607">
    <property type="term" value="P:defense response to virus"/>
    <property type="evidence" value="ECO:0007669"/>
    <property type="project" value="UniProtKB-KW"/>
</dbReference>
<dbReference type="GO" id="GO:0000077">
    <property type="term" value="P:DNA damage checkpoint signaling"/>
    <property type="evidence" value="ECO:0007669"/>
    <property type="project" value="Ensembl"/>
</dbReference>
<dbReference type="GO" id="GO:0140861">
    <property type="term" value="P:DNA repair-dependent chromatin remodeling"/>
    <property type="evidence" value="ECO:0000250"/>
    <property type="project" value="UniProtKB"/>
</dbReference>
<dbReference type="GO" id="GO:0006302">
    <property type="term" value="P:double-strand break repair"/>
    <property type="evidence" value="ECO:0000250"/>
    <property type="project" value="UniProtKB"/>
</dbReference>
<dbReference type="GO" id="GO:0008333">
    <property type="term" value="P:endosome to lysosome transport"/>
    <property type="evidence" value="ECO:0007669"/>
    <property type="project" value="Ensembl"/>
</dbReference>
<dbReference type="GO" id="GO:0045087">
    <property type="term" value="P:innate immune response"/>
    <property type="evidence" value="ECO:0007669"/>
    <property type="project" value="UniProtKB-KW"/>
</dbReference>
<dbReference type="GO" id="GO:0007219">
    <property type="term" value="P:Notch signaling pathway"/>
    <property type="evidence" value="ECO:0007669"/>
    <property type="project" value="InterPro"/>
</dbReference>
<dbReference type="GO" id="GO:0002230">
    <property type="term" value="P:positive regulation of defense response to virus by host"/>
    <property type="evidence" value="ECO:0007669"/>
    <property type="project" value="Ensembl"/>
</dbReference>
<dbReference type="GO" id="GO:0045893">
    <property type="term" value="P:positive regulation of DNA-templated transcription"/>
    <property type="evidence" value="ECO:0007669"/>
    <property type="project" value="Ensembl"/>
</dbReference>
<dbReference type="GO" id="GO:1902966">
    <property type="term" value="P:positive regulation of protein localization to early endosome"/>
    <property type="evidence" value="ECO:0007669"/>
    <property type="project" value="Ensembl"/>
</dbReference>
<dbReference type="GO" id="GO:1900182">
    <property type="term" value="P:positive regulation of protein localization to nucleus"/>
    <property type="evidence" value="ECO:0007669"/>
    <property type="project" value="Ensembl"/>
</dbReference>
<dbReference type="GO" id="GO:2000646">
    <property type="term" value="P:positive regulation of receptor catabolic process"/>
    <property type="evidence" value="ECO:0007669"/>
    <property type="project" value="Ensembl"/>
</dbReference>
<dbReference type="GO" id="GO:0051865">
    <property type="term" value="P:protein autoubiquitination"/>
    <property type="evidence" value="ECO:0007669"/>
    <property type="project" value="Ensembl"/>
</dbReference>
<dbReference type="GO" id="GO:0070936">
    <property type="term" value="P:protein K48-linked ubiquitination"/>
    <property type="evidence" value="ECO:0007669"/>
    <property type="project" value="Ensembl"/>
</dbReference>
<dbReference type="GO" id="GO:0015031">
    <property type="term" value="P:protein transport"/>
    <property type="evidence" value="ECO:0007669"/>
    <property type="project" value="UniProtKB-KW"/>
</dbReference>
<dbReference type="GO" id="GO:0006511">
    <property type="term" value="P:ubiquitin-dependent protein catabolic process"/>
    <property type="evidence" value="ECO:0007669"/>
    <property type="project" value="Ensembl"/>
</dbReference>
<dbReference type="CDD" id="cd09633">
    <property type="entry name" value="Deltex_C"/>
    <property type="match status" value="1"/>
</dbReference>
<dbReference type="FunFam" id="3.30.390.130:FF:000001">
    <property type="entry name" value="Probable E3 ubiquitin-protein ligase DTX3"/>
    <property type="match status" value="1"/>
</dbReference>
<dbReference type="Gene3D" id="3.30.390.130">
    <property type="match status" value="1"/>
</dbReference>
<dbReference type="Gene3D" id="3.30.70.330">
    <property type="match status" value="1"/>
</dbReference>
<dbReference type="Gene3D" id="3.30.40.10">
    <property type="entry name" value="Zinc/RING finger domain, C3HC4 (zinc finger)"/>
    <property type="match status" value="1"/>
</dbReference>
<dbReference type="InterPro" id="IPR039396">
    <property type="entry name" value="Deltex_C"/>
</dbReference>
<dbReference type="InterPro" id="IPR039399">
    <property type="entry name" value="Deltex_C_sf"/>
</dbReference>
<dbReference type="InterPro" id="IPR039398">
    <property type="entry name" value="Deltex_fam"/>
</dbReference>
<dbReference type="InterPro" id="IPR048418">
    <property type="entry name" value="DTX3L_a/b_dom"/>
</dbReference>
<dbReference type="InterPro" id="IPR048409">
    <property type="entry name" value="DTX3L_KH-like"/>
</dbReference>
<dbReference type="InterPro" id="IPR012677">
    <property type="entry name" value="Nucleotide-bd_a/b_plait_sf"/>
</dbReference>
<dbReference type="InterPro" id="IPR057051">
    <property type="entry name" value="PARP14_RPM_1"/>
</dbReference>
<dbReference type="InterPro" id="IPR001841">
    <property type="entry name" value="Znf_RING"/>
</dbReference>
<dbReference type="InterPro" id="IPR013083">
    <property type="entry name" value="Znf_RING/FYVE/PHD"/>
</dbReference>
<dbReference type="InterPro" id="IPR017907">
    <property type="entry name" value="Znf_RING_CS"/>
</dbReference>
<dbReference type="PANTHER" id="PTHR12622">
    <property type="entry name" value="DELTEX-RELATED"/>
    <property type="match status" value="1"/>
</dbReference>
<dbReference type="Pfam" id="PF18102">
    <property type="entry name" value="DTC"/>
    <property type="match status" value="1"/>
</dbReference>
<dbReference type="Pfam" id="PF21717">
    <property type="entry name" value="DTX3L_a-b"/>
    <property type="match status" value="1"/>
</dbReference>
<dbReference type="Pfam" id="PF21718">
    <property type="entry name" value="KH_DTX3L"/>
    <property type="match status" value="2"/>
</dbReference>
<dbReference type="Pfam" id="PF23222">
    <property type="entry name" value="RRM_PARP14_1"/>
    <property type="match status" value="1"/>
</dbReference>
<dbReference type="Pfam" id="PF13923">
    <property type="entry name" value="zf-C3HC4_2"/>
    <property type="match status" value="1"/>
</dbReference>
<dbReference type="SMART" id="SM00184">
    <property type="entry name" value="RING"/>
    <property type="match status" value="1"/>
</dbReference>
<dbReference type="SUPFAM" id="SSF57850">
    <property type="entry name" value="RING/U-box"/>
    <property type="match status" value="1"/>
</dbReference>
<dbReference type="PROSITE" id="PS00518">
    <property type="entry name" value="ZF_RING_1"/>
    <property type="match status" value="1"/>
</dbReference>
<dbReference type="PROSITE" id="PS50089">
    <property type="entry name" value="ZF_RING_2"/>
    <property type="match status" value="1"/>
</dbReference>
<feature type="initiator methionine" description="Removed" evidence="1">
    <location>
        <position position="1"/>
    </location>
</feature>
<feature type="chain" id="PRO_0000390470" description="E3 ubiquitin-protein ligase DTX3L">
    <location>
        <begin position="2"/>
        <end position="748"/>
    </location>
</feature>
<feature type="zinc finger region" description="RING-type" evidence="2">
    <location>
        <begin position="569"/>
        <end position="608"/>
    </location>
</feature>
<feature type="region of interest" description="Disordered" evidence="3">
    <location>
        <begin position="94"/>
        <end position="117"/>
    </location>
</feature>
<feature type="region of interest" description="Disordered" evidence="3">
    <location>
        <begin position="209"/>
        <end position="238"/>
    </location>
</feature>
<feature type="region of interest" description="Disordered" evidence="3">
    <location>
        <begin position="528"/>
        <end position="562"/>
    </location>
</feature>
<feature type="compositionally biased region" description="Polar residues" evidence="3">
    <location>
        <begin position="101"/>
        <end position="117"/>
    </location>
</feature>
<feature type="compositionally biased region" description="Basic and acidic residues" evidence="3">
    <location>
        <begin position="209"/>
        <end position="219"/>
    </location>
</feature>
<feature type="compositionally biased region" description="Basic and acidic residues" evidence="3">
    <location>
        <begin position="227"/>
        <end position="236"/>
    </location>
</feature>
<feature type="modified residue" description="N-acetylalanine" evidence="1">
    <location>
        <position position="2"/>
    </location>
</feature>
<feature type="modified residue" description="Phosphoserine" evidence="1">
    <location>
        <position position="9"/>
    </location>
</feature>
<feature type="modified residue" description="Phosphoserine" evidence="1">
    <location>
        <position position="215"/>
    </location>
</feature>
<feature type="modified residue" description="Phosphoserine" evidence="1">
    <location>
        <position position="536"/>
    </location>
</feature>
<feature type="splice variant" id="VSP_038533" description="In isoform 2." evidence="5">
    <original>KEHPNPGKAYHGTRRTAYLPDNTEGRKVLDLLHEAFKHRLTFTIGYSRATGVSDVITWNDIHHKTSKFGGPANFGYPDPDYLKRVKEELKAKGIE</original>
    <variation>VSVPEEHGFLFAMLELPKSNEASYSLLDNDFPRKSFIL</variation>
    <location>
        <begin position="654"/>
        <end position="748"/>
    </location>
</feature>
<accession>Q3UIR3</accession>
<accession>Q8BN11</accession>
<reference key="1">
    <citation type="journal article" date="2005" name="Science">
        <title>The transcriptional landscape of the mammalian genome.</title>
        <authorList>
            <person name="Carninci P."/>
            <person name="Kasukawa T."/>
            <person name="Katayama S."/>
            <person name="Gough J."/>
            <person name="Frith M.C."/>
            <person name="Maeda N."/>
            <person name="Oyama R."/>
            <person name="Ravasi T."/>
            <person name="Lenhard B."/>
            <person name="Wells C."/>
            <person name="Kodzius R."/>
            <person name="Shimokawa K."/>
            <person name="Bajic V.B."/>
            <person name="Brenner S.E."/>
            <person name="Batalov S."/>
            <person name="Forrest A.R."/>
            <person name="Zavolan M."/>
            <person name="Davis M.J."/>
            <person name="Wilming L.G."/>
            <person name="Aidinis V."/>
            <person name="Allen J.E."/>
            <person name="Ambesi-Impiombato A."/>
            <person name="Apweiler R."/>
            <person name="Aturaliya R.N."/>
            <person name="Bailey T.L."/>
            <person name="Bansal M."/>
            <person name="Baxter L."/>
            <person name="Beisel K.W."/>
            <person name="Bersano T."/>
            <person name="Bono H."/>
            <person name="Chalk A.M."/>
            <person name="Chiu K.P."/>
            <person name="Choudhary V."/>
            <person name="Christoffels A."/>
            <person name="Clutterbuck D.R."/>
            <person name="Crowe M.L."/>
            <person name="Dalla E."/>
            <person name="Dalrymple B.P."/>
            <person name="de Bono B."/>
            <person name="Della Gatta G."/>
            <person name="di Bernardo D."/>
            <person name="Down T."/>
            <person name="Engstrom P."/>
            <person name="Fagiolini M."/>
            <person name="Faulkner G."/>
            <person name="Fletcher C.F."/>
            <person name="Fukushima T."/>
            <person name="Furuno M."/>
            <person name="Futaki S."/>
            <person name="Gariboldi M."/>
            <person name="Georgii-Hemming P."/>
            <person name="Gingeras T.R."/>
            <person name="Gojobori T."/>
            <person name="Green R.E."/>
            <person name="Gustincich S."/>
            <person name="Harbers M."/>
            <person name="Hayashi Y."/>
            <person name="Hensch T.K."/>
            <person name="Hirokawa N."/>
            <person name="Hill D."/>
            <person name="Huminiecki L."/>
            <person name="Iacono M."/>
            <person name="Ikeo K."/>
            <person name="Iwama A."/>
            <person name="Ishikawa T."/>
            <person name="Jakt M."/>
            <person name="Kanapin A."/>
            <person name="Katoh M."/>
            <person name="Kawasawa Y."/>
            <person name="Kelso J."/>
            <person name="Kitamura H."/>
            <person name="Kitano H."/>
            <person name="Kollias G."/>
            <person name="Krishnan S.P."/>
            <person name="Kruger A."/>
            <person name="Kummerfeld S.K."/>
            <person name="Kurochkin I.V."/>
            <person name="Lareau L.F."/>
            <person name="Lazarevic D."/>
            <person name="Lipovich L."/>
            <person name="Liu J."/>
            <person name="Liuni S."/>
            <person name="McWilliam S."/>
            <person name="Madan Babu M."/>
            <person name="Madera M."/>
            <person name="Marchionni L."/>
            <person name="Matsuda H."/>
            <person name="Matsuzawa S."/>
            <person name="Miki H."/>
            <person name="Mignone F."/>
            <person name="Miyake S."/>
            <person name="Morris K."/>
            <person name="Mottagui-Tabar S."/>
            <person name="Mulder N."/>
            <person name="Nakano N."/>
            <person name="Nakauchi H."/>
            <person name="Ng P."/>
            <person name="Nilsson R."/>
            <person name="Nishiguchi S."/>
            <person name="Nishikawa S."/>
            <person name="Nori F."/>
            <person name="Ohara O."/>
            <person name="Okazaki Y."/>
            <person name="Orlando V."/>
            <person name="Pang K.C."/>
            <person name="Pavan W.J."/>
            <person name="Pavesi G."/>
            <person name="Pesole G."/>
            <person name="Petrovsky N."/>
            <person name="Piazza S."/>
            <person name="Reed J."/>
            <person name="Reid J.F."/>
            <person name="Ring B.Z."/>
            <person name="Ringwald M."/>
            <person name="Rost B."/>
            <person name="Ruan Y."/>
            <person name="Salzberg S.L."/>
            <person name="Sandelin A."/>
            <person name="Schneider C."/>
            <person name="Schoenbach C."/>
            <person name="Sekiguchi K."/>
            <person name="Semple C.A."/>
            <person name="Seno S."/>
            <person name="Sessa L."/>
            <person name="Sheng Y."/>
            <person name="Shibata Y."/>
            <person name="Shimada H."/>
            <person name="Shimada K."/>
            <person name="Silva D."/>
            <person name="Sinclair B."/>
            <person name="Sperling S."/>
            <person name="Stupka E."/>
            <person name="Sugiura K."/>
            <person name="Sultana R."/>
            <person name="Takenaka Y."/>
            <person name="Taki K."/>
            <person name="Tammoja K."/>
            <person name="Tan S.L."/>
            <person name="Tang S."/>
            <person name="Taylor M.S."/>
            <person name="Tegner J."/>
            <person name="Teichmann S.A."/>
            <person name="Ueda H.R."/>
            <person name="van Nimwegen E."/>
            <person name="Verardo R."/>
            <person name="Wei C.L."/>
            <person name="Yagi K."/>
            <person name="Yamanishi H."/>
            <person name="Zabarovsky E."/>
            <person name="Zhu S."/>
            <person name="Zimmer A."/>
            <person name="Hide W."/>
            <person name="Bult C."/>
            <person name="Grimmond S.M."/>
            <person name="Teasdale R.D."/>
            <person name="Liu E.T."/>
            <person name="Brusic V."/>
            <person name="Quackenbush J."/>
            <person name="Wahlestedt C."/>
            <person name="Mattick J.S."/>
            <person name="Hume D.A."/>
            <person name="Kai C."/>
            <person name="Sasaki D."/>
            <person name="Tomaru Y."/>
            <person name="Fukuda S."/>
            <person name="Kanamori-Katayama M."/>
            <person name="Suzuki M."/>
            <person name="Aoki J."/>
            <person name="Arakawa T."/>
            <person name="Iida J."/>
            <person name="Imamura K."/>
            <person name="Itoh M."/>
            <person name="Kato T."/>
            <person name="Kawaji H."/>
            <person name="Kawagashira N."/>
            <person name="Kawashima T."/>
            <person name="Kojima M."/>
            <person name="Kondo S."/>
            <person name="Konno H."/>
            <person name="Nakano K."/>
            <person name="Ninomiya N."/>
            <person name="Nishio T."/>
            <person name="Okada M."/>
            <person name="Plessy C."/>
            <person name="Shibata K."/>
            <person name="Shiraki T."/>
            <person name="Suzuki S."/>
            <person name="Tagami M."/>
            <person name="Waki K."/>
            <person name="Watahiki A."/>
            <person name="Okamura-Oho Y."/>
            <person name="Suzuki H."/>
            <person name="Kawai J."/>
            <person name="Hayashizaki Y."/>
        </authorList>
    </citation>
    <scope>NUCLEOTIDE SEQUENCE [LARGE SCALE MRNA] (ISOFORMS 1 AND 2)</scope>
    <source>
        <strain>C57BL/6J</strain>
        <tissue>Amnion</tissue>
        <tissue>Lymph node</tissue>
    </source>
</reference>
<reference key="2">
    <citation type="submission" date="2005-07" db="EMBL/GenBank/DDBJ databases">
        <authorList>
            <person name="Mural R.J."/>
            <person name="Adams M.D."/>
            <person name="Myers E.W."/>
            <person name="Smith H.O."/>
            <person name="Venter J.C."/>
        </authorList>
    </citation>
    <scope>NUCLEOTIDE SEQUENCE [LARGE SCALE GENOMIC DNA]</scope>
</reference>
<reference key="3">
    <citation type="journal article" date="2004" name="Genome Res.">
        <title>The status, quality, and expansion of the NIH full-length cDNA project: the Mammalian Gene Collection (MGC).</title>
        <authorList>
            <consortium name="The MGC Project Team"/>
        </authorList>
    </citation>
    <scope>NUCLEOTIDE SEQUENCE [LARGE SCALE MRNA] (ISOFORM 1)</scope>
    <source>
        <tissue>Brain</tissue>
    </source>
</reference>
<reference key="4">
    <citation type="journal article" date="2008" name="Dev. Dyn.">
        <title>The macroPARP genes Parp-9 and Parp-14 are developmentally and differentially regulated in mouse tissues.</title>
        <authorList>
            <person name="Hakme A."/>
            <person name="Huber A."/>
            <person name="Dolle P."/>
            <person name="Schreiber V."/>
        </authorList>
    </citation>
    <scope>DEVELOPMENTAL STAGE</scope>
</reference>
<reference key="5">
    <citation type="journal article" date="2010" name="Cell">
        <title>A tissue-specific atlas of mouse protein phosphorylation and expression.</title>
        <authorList>
            <person name="Huttlin E.L."/>
            <person name="Jedrychowski M.P."/>
            <person name="Elias J.E."/>
            <person name="Goswami T."/>
            <person name="Rad R."/>
            <person name="Beausoleil S.A."/>
            <person name="Villen J."/>
            <person name="Haas W."/>
            <person name="Sowa M.E."/>
            <person name="Gygi S.P."/>
        </authorList>
    </citation>
    <scope>IDENTIFICATION BY MASS SPECTROMETRY [LARGE SCALE ANALYSIS]</scope>
    <source>
        <tissue>Heart</tissue>
        <tissue>Liver</tissue>
        <tissue>Lung</tissue>
        <tissue>Spleen</tissue>
    </source>
</reference>